<sequence>TFINVKCTSPKQCLKPCKDLYGPHAGEKCMNGKCKCYKP</sequence>
<name>KAX2N_CENBO</name>
<dbReference type="SMR" id="C0HM72"/>
<dbReference type="GO" id="GO:0005576">
    <property type="term" value="C:extracellular region"/>
    <property type="evidence" value="ECO:0007669"/>
    <property type="project" value="UniProtKB-SubCell"/>
</dbReference>
<dbReference type="GO" id="GO:0008200">
    <property type="term" value="F:ion channel inhibitor activity"/>
    <property type="evidence" value="ECO:0007669"/>
    <property type="project" value="InterPro"/>
</dbReference>
<dbReference type="GO" id="GO:0015459">
    <property type="term" value="F:potassium channel regulator activity"/>
    <property type="evidence" value="ECO:0007669"/>
    <property type="project" value="UniProtKB-KW"/>
</dbReference>
<dbReference type="GO" id="GO:0090729">
    <property type="term" value="F:toxin activity"/>
    <property type="evidence" value="ECO:0007669"/>
    <property type="project" value="UniProtKB-KW"/>
</dbReference>
<dbReference type="FunFam" id="3.30.30.10:FF:000009">
    <property type="entry name" value="Potassium channel toxin alpha-KTx 4.3"/>
    <property type="match status" value="1"/>
</dbReference>
<dbReference type="Gene3D" id="3.30.30.10">
    <property type="entry name" value="Knottin, scorpion toxin-like"/>
    <property type="match status" value="1"/>
</dbReference>
<dbReference type="InterPro" id="IPR036574">
    <property type="entry name" value="Scorpion_toxin-like_sf"/>
</dbReference>
<dbReference type="InterPro" id="IPR001947">
    <property type="entry name" value="Scorpion_toxinS_K_inh"/>
</dbReference>
<dbReference type="Pfam" id="PF00451">
    <property type="entry name" value="Toxin_2"/>
    <property type="match status" value="1"/>
</dbReference>
<dbReference type="PRINTS" id="PR00286">
    <property type="entry name" value="CHARYBDTOXIN"/>
</dbReference>
<dbReference type="SUPFAM" id="SSF57095">
    <property type="entry name" value="Scorpion toxin-like"/>
    <property type="match status" value="1"/>
</dbReference>
<protein>
    <recommendedName>
        <fullName evidence="4">Potassium channel toxin alpha-KTx 2.23</fullName>
    </recommendedName>
    <alternativeName>
        <fullName evidence="4">CboK4</fullName>
    </alternativeName>
</protein>
<accession>C0HM72</accession>
<keyword id="KW-1221">Calcium-activated potassium channel impairing toxin</keyword>
<keyword id="KW-0903">Direct protein sequencing</keyword>
<keyword id="KW-1015">Disulfide bond</keyword>
<keyword id="KW-0872">Ion channel impairing toxin</keyword>
<keyword id="KW-0528">Neurotoxin</keyword>
<keyword id="KW-0632">Potassium channel impairing toxin</keyword>
<keyword id="KW-0964">Secreted</keyword>
<keyword id="KW-0800">Toxin</keyword>
<keyword id="KW-1220">Voltage-gated potassium channel impairing toxin</keyword>
<comment type="function">
    <text evidence="3">Blocks human voltage-gated potassium (Kv) channels Kv1.1/KCNA1, Kv1.2/KCNA2 and Kv1.3/KCNA3.</text>
</comment>
<comment type="subcellular location">
    <subcellularLocation>
        <location evidence="3">Secreted</location>
    </subcellularLocation>
</comment>
<comment type="tissue specificity">
    <text evidence="6">Expressed by the venom gland.</text>
</comment>
<comment type="domain">
    <text evidence="2">Has the structural arrangement of an alpha-helix connected to a beta-sheet by disulfide bonds (CSalpha/beta).</text>
</comment>
<comment type="mass spectrometry"/>
<comment type="similarity">
    <text evidence="5">Belongs to the short scorpion toxin superfamily. Potassium channel inhibitor family. Alpha-KTx 02 subfamily.</text>
</comment>
<reference evidence="5" key="1">
    <citation type="journal article" date="2023" name="Toxins">
        <title>Of Seven New K+ Channel Inhibitor Peptides of Centruroides bonito, alpha-KTx 2.24 Has a Picomolar Affinity for Kv1.2.</title>
        <authorList>
            <person name="Shakeel K."/>
            <person name="Olamendi-Portugal T."/>
            <person name="Naseem M.U."/>
            <person name="Becerril B."/>
            <person name="Zamudio F.Z."/>
            <person name="Delgado-Prudencio G."/>
            <person name="Possani L.D."/>
            <person name="Panyi G."/>
        </authorList>
    </citation>
    <scope>PROTEIN SEQUENCE</scope>
    <scope>FUNCTION</scope>
    <scope>SUBCELLULAR LOCATION</scope>
    <scope>TISSUE SPECIFICITY</scope>
    <scope>MASS SPECTROMETRY</scope>
</reference>
<proteinExistence type="evidence at protein level"/>
<feature type="chain" id="PRO_0000459532" description="Potassium channel toxin alpha-KTx 2.23">
    <location>
        <begin position="1"/>
        <end position="39"/>
    </location>
</feature>
<feature type="site" description="Basic residue of the functional dyad" evidence="1">
    <location>
        <position position="28"/>
    </location>
</feature>
<feature type="site" description="Aromatic residue of the functional dyad" evidence="1">
    <location>
        <position position="37"/>
    </location>
</feature>
<feature type="disulfide bond" evidence="2">
    <location>
        <begin position="7"/>
        <end position="29"/>
    </location>
</feature>
<feature type="disulfide bond" evidence="2">
    <location>
        <begin position="13"/>
        <end position="34"/>
    </location>
</feature>
<feature type="disulfide bond" evidence="2">
    <location>
        <begin position="17"/>
        <end position="36"/>
    </location>
</feature>
<feature type="non-terminal residue" evidence="4">
    <location>
        <position position="39"/>
    </location>
</feature>
<evidence type="ECO:0000250" key="1">
    <source>
        <dbReference type="UniProtKB" id="O46028"/>
    </source>
</evidence>
<evidence type="ECO:0000250" key="2">
    <source>
        <dbReference type="UniProtKB" id="P08815"/>
    </source>
</evidence>
<evidence type="ECO:0000269" key="3">
    <source>
    </source>
</evidence>
<evidence type="ECO:0000303" key="4">
    <source>
    </source>
</evidence>
<evidence type="ECO:0000305" key="5"/>
<evidence type="ECO:0000305" key="6">
    <source>
    </source>
</evidence>
<organism>
    <name type="scientific">Centruroides bonito</name>
    <name type="common">Scorpion</name>
    <dbReference type="NCBI Taxonomy" id="3035065"/>
    <lineage>
        <taxon>Eukaryota</taxon>
        <taxon>Metazoa</taxon>
        <taxon>Ecdysozoa</taxon>
        <taxon>Arthropoda</taxon>
        <taxon>Chelicerata</taxon>
        <taxon>Arachnida</taxon>
        <taxon>Scorpiones</taxon>
        <taxon>Buthida</taxon>
        <taxon>Buthoidea</taxon>
        <taxon>Buthidae</taxon>
        <taxon>Centruroides</taxon>
    </lineage>
</organism>